<gene>
    <name evidence="7" type="primary">nadA</name>
    <name evidence="8" type="synonym">nadA5</name>
</gene>
<proteinExistence type="evidence at protein level"/>
<feature type="signal peptide" evidence="4">
    <location>
        <begin position="1"/>
        <end position="23"/>
    </location>
</feature>
<feature type="chain" id="PRO_5002624564" description="Neisseria adhesin A" evidence="4">
    <location>
        <begin position="24"/>
        <end position="325"/>
    </location>
</feature>
<feature type="transmembrane region" description="Beta stranded" evidence="1">
    <location>
        <begin position="270"/>
        <end position="280"/>
    </location>
</feature>
<feature type="transmembrane region" description="Beta stranded" evidence="1">
    <location>
        <begin position="284"/>
        <end position="295"/>
    </location>
</feature>
<feature type="transmembrane region" description="Beta stranded" evidence="1">
    <location>
        <begin position="302"/>
        <end position="308"/>
    </location>
</feature>
<feature type="transmembrane region" description="Beta stranded" evidence="1">
    <location>
        <begin position="314"/>
        <end position="325"/>
    </location>
</feature>
<feature type="region of interest" description="Head domain" evidence="5">
    <location>
        <begin position="24"/>
        <end position="137"/>
    </location>
</feature>
<feature type="region of interest" description="Coiled stalk domain" evidence="9">
    <location>
        <begin position="139"/>
        <end position="231"/>
    </location>
</feature>
<feature type="region of interest" description="Outer membrane translocation of the passenger domain" evidence="2">
    <location>
        <begin position="232"/>
        <end position="270"/>
    </location>
</feature>
<feature type="region of interest" description="Translocator domain" evidence="2">
    <location>
        <begin position="271"/>
        <end position="325"/>
    </location>
</feature>
<feature type="coiled-coil region" evidence="9 10">
    <location>
        <begin position="86"/>
        <end position="135"/>
    </location>
</feature>
<feature type="helix" evidence="11">
    <location>
        <begin position="30"/>
        <end position="49"/>
    </location>
</feature>
<feature type="strand" evidence="11">
    <location>
        <begin position="56"/>
        <end position="61"/>
    </location>
</feature>
<feature type="strand" evidence="11">
    <location>
        <begin position="65"/>
        <end position="70"/>
    </location>
</feature>
<feature type="helix" evidence="11">
    <location>
        <begin position="73"/>
        <end position="78"/>
    </location>
</feature>
<feature type="turn" evidence="11">
    <location>
        <begin position="80"/>
        <end position="83"/>
    </location>
</feature>
<feature type="helix" evidence="11">
    <location>
        <begin position="86"/>
        <end position="135"/>
    </location>
</feature>
<feature type="helix" evidence="11">
    <location>
        <begin position="201"/>
        <end position="209"/>
    </location>
</feature>
<name>NADA5_NEIMI</name>
<comment type="function">
    <text evidence="3">An antigenic bacterial cell surface protein that adheres to and induces bacterial uptake by human epithelial cells.</text>
</comment>
<comment type="subunit">
    <text evidence="9">Homotrimer.</text>
</comment>
<comment type="subcellular location">
    <subcellularLocation>
        <location evidence="3">Cell surface</location>
    </subcellularLocation>
    <subcellularLocation>
        <location evidence="3">Cell outer membrane</location>
    </subcellularLocation>
</comment>
<comment type="domain">
    <text evidence="2 5 10">The signal peptide, cleaved at the inner membrane, guides the autotransporter protein to the periplasmic space. Insertion of the C-terminal translocator domain in the outer membrane forms a hydrophilic pore for the translocation of the passenger domain to the bacterial cell surface (By similarity). The head region (residues 27-137) forms at the top of a long trimeric stalk. The head itself is almost exclusively coiled-coil that can be divided in two fragments (residues 34-48 and 85-137, respectively) separated by an insertion (residues 49-84) that forms 3 wing-like structures per trimer that pack against the N-terminus. Only residues 27-137 and 199-210 gave a defined structure (PubMed:25404323).</text>
</comment>
<comment type="biotechnology">
    <text evidence="5">Several alleles exist that vary in length, this is allele 5, which is not cross-reactive with all antibodies against alleles 1, 2, or 3.</text>
</comment>
<comment type="miscellaneous">
    <text evidence="8">About 50% of hypervirulent serogroup B N.meningitidis encode this protein.</text>
</comment>
<comment type="similarity">
    <text evidence="8">Belongs to the autotransporter-2 (AT-2) (TC 1.B.40) family.</text>
</comment>
<comment type="caution">
    <text>The gene name nadA has also been given to quinolinate synthase.</text>
</comment>
<comment type="online information" name="Bexsero meningococcal group B Vaccine">
    <link uri="https://www.ema.europa.eu/en/medicines/human/EPAR/bexsero"/>
</comment>
<organism>
    <name type="scientific">Neisseria meningitidis serogroup B</name>
    <dbReference type="NCBI Taxonomy" id="491"/>
    <lineage>
        <taxon>Bacteria</taxon>
        <taxon>Pseudomonadati</taxon>
        <taxon>Pseudomonadota</taxon>
        <taxon>Betaproteobacteria</taxon>
        <taxon>Neisseriales</taxon>
        <taxon>Neisseriaceae</taxon>
        <taxon>Neisseria</taxon>
    </lineage>
</organism>
<protein>
    <recommendedName>
        <fullName evidence="6">Neisseria adhesin A</fullName>
        <shortName evidence="6">NadA variant 5</shortName>
    </recommendedName>
</protein>
<keyword id="KW-0002">3D-structure</keyword>
<keyword id="KW-0998">Cell outer membrane</keyword>
<keyword id="KW-0175">Coiled coil</keyword>
<keyword id="KW-0472">Membrane</keyword>
<keyword id="KW-0732">Signal</keyword>
<keyword id="KW-0812">Transmembrane</keyword>
<keyword id="KW-1134">Transmembrane beta strand</keyword>
<keyword id="KW-0813">Transport</keyword>
<keyword id="KW-0843">Virulence</keyword>
<accession>A0ELI2</accession>
<dbReference type="EMBL" id="DQ239929">
    <property type="protein sequence ID" value="ABC25681.1"/>
    <property type="molecule type" value="Genomic_DNA"/>
</dbReference>
<dbReference type="PDB" id="4CJD">
    <property type="method" value="X-ray"/>
    <property type="resolution" value="2.06 A"/>
    <property type="chains" value="A=24-221"/>
</dbReference>
<dbReference type="PDBsum" id="4CJD"/>
<dbReference type="SMR" id="A0ELI2"/>
<dbReference type="GO" id="GO:0009279">
    <property type="term" value="C:cell outer membrane"/>
    <property type="evidence" value="ECO:0007669"/>
    <property type="project" value="UniProtKB-SubCell"/>
</dbReference>
<dbReference type="GO" id="GO:0009986">
    <property type="term" value="C:cell surface"/>
    <property type="evidence" value="ECO:0007669"/>
    <property type="project" value="UniProtKB-SubCell"/>
</dbReference>
<dbReference type="Gene3D" id="1.20.5.340">
    <property type="match status" value="1"/>
</dbReference>
<dbReference type="Gene3D" id="3.30.1300.30">
    <property type="entry name" value="GSPII I/J protein-like"/>
    <property type="match status" value="1"/>
</dbReference>
<dbReference type="InterPro" id="IPR045584">
    <property type="entry name" value="Pilin-like"/>
</dbReference>
<dbReference type="InterPro" id="IPR005594">
    <property type="entry name" value="YadA_C"/>
</dbReference>
<dbReference type="Pfam" id="PF03895">
    <property type="entry name" value="YadA_anchor"/>
    <property type="match status" value="1"/>
</dbReference>
<dbReference type="SUPFAM" id="SSF54523">
    <property type="entry name" value="Pili subunits"/>
    <property type="match status" value="1"/>
</dbReference>
<reference key="1">
    <citation type="submission" date="2005-10" db="EMBL/GenBank/DDBJ databases">
        <title>NadA distribution and diversification in Neisseria meningitidis.</title>
        <authorList>
            <person name="Bambini S."/>
            <person name="Caugant D.A."/>
            <person name="Mora M."/>
            <person name="Santini L."/>
            <person name="Rappuoli R."/>
            <person name="Pizza M."/>
            <person name="Comanducci M."/>
        </authorList>
    </citation>
    <scope>NUCLEOTIDE SEQUENCE [GENOMIC DNA]</scope>
    <source>
        <strain>LNP15709</strain>
    </source>
</reference>
<reference evidence="10" key="2">
    <citation type="journal article" date="2014" name="Proc. Natl. Acad. Sci. U.S.A.">
        <title>Structure of the meningococcal vaccine antigen NadA and epitope mapping of a bactericidal antibody.</title>
        <authorList>
            <person name="Malito E."/>
            <person name="Biancucci M."/>
            <person name="Faleri A."/>
            <person name="Ferlenghi I."/>
            <person name="Scarselli M."/>
            <person name="Maruggi G."/>
            <person name="Lo Surdo P."/>
            <person name="Veggi D."/>
            <person name="Liguori A."/>
            <person name="Santini L."/>
            <person name="Bertoldi I."/>
            <person name="Petracca R."/>
            <person name="Marchi S."/>
            <person name="Romagnoli G."/>
            <person name="Cartocci E."/>
            <person name="Vercellino I."/>
            <person name="Savino S."/>
            <person name="Spraggon G."/>
            <person name="Norais N."/>
            <person name="Pizza M."/>
            <person name="Rappuoli R."/>
            <person name="Masignani V."/>
            <person name="Bottomley M.J."/>
        </authorList>
    </citation>
    <scope>X-RAY CRYSTALLOGRAPHY (2.06 ANGSTROMS) OF 24-221</scope>
    <scope>SUBUNIT</scope>
    <scope>DOMAIN</scope>
    <source>
        <strain>M01-240320</strain>
    </source>
</reference>
<evidence type="ECO:0000250" key="1">
    <source>
        <dbReference type="UniProtKB" id="A1JUB7"/>
    </source>
</evidence>
<evidence type="ECO:0000250" key="2">
    <source>
        <dbReference type="UniProtKB" id="P0C2W0"/>
    </source>
</evidence>
<evidence type="ECO:0000250" key="3">
    <source>
        <dbReference type="UniProtKB" id="P0DV44"/>
    </source>
</evidence>
<evidence type="ECO:0000255" key="4"/>
<evidence type="ECO:0000269" key="5">
    <source>
    </source>
</evidence>
<evidence type="ECO:0000303" key="6">
    <source>
    </source>
</evidence>
<evidence type="ECO:0000303" key="7">
    <source ref="1"/>
</evidence>
<evidence type="ECO:0000305" key="8"/>
<evidence type="ECO:0000305" key="9">
    <source>
    </source>
</evidence>
<evidence type="ECO:0007744" key="10">
    <source>
        <dbReference type="PDB" id="4CJD"/>
    </source>
</evidence>
<evidence type="ECO:0007829" key="11">
    <source>
        <dbReference type="PDB" id="4CJD"/>
    </source>
</evidence>
<sequence>MKHFQSKVLTAAILAALSGSAMADNPPPSTDEIAKAALVNSYNNTQDINGFKVGDTIYDINGNGKITRKTATEDDVKADDFGGLGLKEVLAQHDQSLADLTGTVDENSEALVKTAEVVNDISADVKANTAAIGENKAAIAKKADQTALDAVSEKVTANETAIGKKANSADVYTKAEVYTKQESDNRFVKIGDRIGNLNTTANGLETRLADAEKSVADHGTRLASAEKSITEHGTRLNGLDRTVSDLRKETRQGLAEQAALSGLFQPYNVGRFNVTAAVGGYKSESAVAIGTGFRFTENFAAKAGVAVGTSSGSSAAYHVGVNYEW</sequence>